<evidence type="ECO:0000255" key="1">
    <source>
        <dbReference type="HAMAP-Rule" id="MF_00480"/>
    </source>
</evidence>
<evidence type="ECO:0000305" key="2"/>
<feature type="chain" id="PRO_1000014211" description="Small ribosomal subunit protein uS7">
    <location>
        <begin position="1"/>
        <end position="156"/>
    </location>
</feature>
<protein>
    <recommendedName>
        <fullName evidence="1">Small ribosomal subunit protein uS7</fullName>
    </recommendedName>
    <alternativeName>
        <fullName evidence="2">30S ribosomal protein S7</fullName>
    </alternativeName>
</protein>
<accession>Q034X7</accession>
<keyword id="KW-1185">Reference proteome</keyword>
<keyword id="KW-0687">Ribonucleoprotein</keyword>
<keyword id="KW-0689">Ribosomal protein</keyword>
<keyword id="KW-0694">RNA-binding</keyword>
<keyword id="KW-0699">rRNA-binding</keyword>
<keyword id="KW-0820">tRNA-binding</keyword>
<sequence length="156" mass="17924">MPRKGSVAKRDVLPDPVYNSKLVTRLINHLMIDGKRGKASTILYDAFDMIKKQTGNEPLDVFEEAMKNVMPVLEVKARRIGGSNYQVPIEVRPDRRTTLGLRWIVQYSRQRGEHTMDERLAKEIMDAANNTGAAVKKREDTHKMADANRAFAHYRW</sequence>
<proteinExistence type="inferred from homology"/>
<gene>
    <name evidence="1" type="primary">rpsG</name>
    <name type="ordered locus">LSEI_2509</name>
</gene>
<comment type="function">
    <text evidence="1">One of the primary rRNA binding proteins, it binds directly to 16S rRNA where it nucleates assembly of the head domain of the 30S subunit. Is located at the subunit interface close to the decoding center, probably blocks exit of the E-site tRNA.</text>
</comment>
<comment type="subunit">
    <text evidence="1">Part of the 30S ribosomal subunit. Contacts proteins S9 and S11.</text>
</comment>
<comment type="similarity">
    <text evidence="1">Belongs to the universal ribosomal protein uS7 family.</text>
</comment>
<reference key="1">
    <citation type="journal article" date="2006" name="Proc. Natl. Acad. Sci. U.S.A.">
        <title>Comparative genomics of the lactic acid bacteria.</title>
        <authorList>
            <person name="Makarova K.S."/>
            <person name="Slesarev A."/>
            <person name="Wolf Y.I."/>
            <person name="Sorokin A."/>
            <person name="Mirkin B."/>
            <person name="Koonin E.V."/>
            <person name="Pavlov A."/>
            <person name="Pavlova N."/>
            <person name="Karamychev V."/>
            <person name="Polouchine N."/>
            <person name="Shakhova V."/>
            <person name="Grigoriev I."/>
            <person name="Lou Y."/>
            <person name="Rohksar D."/>
            <person name="Lucas S."/>
            <person name="Huang K."/>
            <person name="Goodstein D.M."/>
            <person name="Hawkins T."/>
            <person name="Plengvidhya V."/>
            <person name="Welker D."/>
            <person name="Hughes J."/>
            <person name="Goh Y."/>
            <person name="Benson A."/>
            <person name="Baldwin K."/>
            <person name="Lee J.-H."/>
            <person name="Diaz-Muniz I."/>
            <person name="Dosti B."/>
            <person name="Smeianov V."/>
            <person name="Wechter W."/>
            <person name="Barabote R."/>
            <person name="Lorca G."/>
            <person name="Altermann E."/>
            <person name="Barrangou R."/>
            <person name="Ganesan B."/>
            <person name="Xie Y."/>
            <person name="Rawsthorne H."/>
            <person name="Tamir D."/>
            <person name="Parker C."/>
            <person name="Breidt F."/>
            <person name="Broadbent J.R."/>
            <person name="Hutkins R."/>
            <person name="O'Sullivan D."/>
            <person name="Steele J."/>
            <person name="Unlu G."/>
            <person name="Saier M.H. Jr."/>
            <person name="Klaenhammer T."/>
            <person name="Richardson P."/>
            <person name="Kozyavkin S."/>
            <person name="Weimer B.C."/>
            <person name="Mills D.A."/>
        </authorList>
    </citation>
    <scope>NUCLEOTIDE SEQUENCE [LARGE SCALE GENOMIC DNA]</scope>
    <source>
        <strain>ATCC 334 / BCRC 17002 / CCUG 31169 / CIP 107868 / KCTC 3260 / NRRL B-441</strain>
    </source>
</reference>
<dbReference type="EMBL" id="CP000423">
    <property type="protein sequence ID" value="ABJ71245.1"/>
    <property type="molecule type" value="Genomic_DNA"/>
</dbReference>
<dbReference type="RefSeq" id="WP_003567577.1">
    <property type="nucleotide sequence ID" value="NC_008526.1"/>
</dbReference>
<dbReference type="RefSeq" id="YP_807687.1">
    <property type="nucleotide sequence ID" value="NC_008526.1"/>
</dbReference>
<dbReference type="SMR" id="Q034X7"/>
<dbReference type="STRING" id="321967.LSEI_2509"/>
<dbReference type="PaxDb" id="321967-LSEI_2509"/>
<dbReference type="GeneID" id="93270097"/>
<dbReference type="KEGG" id="lca:LSEI_2509"/>
<dbReference type="PATRIC" id="fig|321967.11.peg.2463"/>
<dbReference type="HOGENOM" id="CLU_072226_1_1_9"/>
<dbReference type="PRO" id="PR:Q034X7"/>
<dbReference type="Proteomes" id="UP000001651">
    <property type="component" value="Chromosome"/>
</dbReference>
<dbReference type="GO" id="GO:0015935">
    <property type="term" value="C:small ribosomal subunit"/>
    <property type="evidence" value="ECO:0007669"/>
    <property type="project" value="InterPro"/>
</dbReference>
<dbReference type="GO" id="GO:0019843">
    <property type="term" value="F:rRNA binding"/>
    <property type="evidence" value="ECO:0007669"/>
    <property type="project" value="UniProtKB-UniRule"/>
</dbReference>
<dbReference type="GO" id="GO:0003735">
    <property type="term" value="F:structural constituent of ribosome"/>
    <property type="evidence" value="ECO:0007669"/>
    <property type="project" value="InterPro"/>
</dbReference>
<dbReference type="GO" id="GO:0000049">
    <property type="term" value="F:tRNA binding"/>
    <property type="evidence" value="ECO:0007669"/>
    <property type="project" value="UniProtKB-UniRule"/>
</dbReference>
<dbReference type="GO" id="GO:0006412">
    <property type="term" value="P:translation"/>
    <property type="evidence" value="ECO:0007669"/>
    <property type="project" value="UniProtKB-UniRule"/>
</dbReference>
<dbReference type="CDD" id="cd14869">
    <property type="entry name" value="uS7_Bacteria"/>
    <property type="match status" value="1"/>
</dbReference>
<dbReference type="FunFam" id="1.10.455.10:FF:000001">
    <property type="entry name" value="30S ribosomal protein S7"/>
    <property type="match status" value="1"/>
</dbReference>
<dbReference type="Gene3D" id="1.10.455.10">
    <property type="entry name" value="Ribosomal protein S7 domain"/>
    <property type="match status" value="1"/>
</dbReference>
<dbReference type="HAMAP" id="MF_00480_B">
    <property type="entry name" value="Ribosomal_uS7_B"/>
    <property type="match status" value="1"/>
</dbReference>
<dbReference type="InterPro" id="IPR000235">
    <property type="entry name" value="Ribosomal_uS7"/>
</dbReference>
<dbReference type="InterPro" id="IPR005717">
    <property type="entry name" value="Ribosomal_uS7_bac/org-type"/>
</dbReference>
<dbReference type="InterPro" id="IPR020606">
    <property type="entry name" value="Ribosomal_uS7_CS"/>
</dbReference>
<dbReference type="InterPro" id="IPR023798">
    <property type="entry name" value="Ribosomal_uS7_dom"/>
</dbReference>
<dbReference type="InterPro" id="IPR036823">
    <property type="entry name" value="Ribosomal_uS7_dom_sf"/>
</dbReference>
<dbReference type="NCBIfam" id="TIGR01029">
    <property type="entry name" value="rpsG_bact"/>
    <property type="match status" value="1"/>
</dbReference>
<dbReference type="PANTHER" id="PTHR11205">
    <property type="entry name" value="RIBOSOMAL PROTEIN S7"/>
    <property type="match status" value="1"/>
</dbReference>
<dbReference type="Pfam" id="PF00177">
    <property type="entry name" value="Ribosomal_S7"/>
    <property type="match status" value="1"/>
</dbReference>
<dbReference type="PIRSF" id="PIRSF002122">
    <property type="entry name" value="RPS7p_RPS7a_RPS5e_RPS7o"/>
    <property type="match status" value="1"/>
</dbReference>
<dbReference type="SUPFAM" id="SSF47973">
    <property type="entry name" value="Ribosomal protein S7"/>
    <property type="match status" value="1"/>
</dbReference>
<dbReference type="PROSITE" id="PS00052">
    <property type="entry name" value="RIBOSOMAL_S7"/>
    <property type="match status" value="1"/>
</dbReference>
<organism>
    <name type="scientific">Lacticaseibacillus paracasei (strain ATCC 334 / BCRC 17002 / CCUG 31169 / CIP 107868 / KCTC 3260 / NRRL B-441)</name>
    <name type="common">Lactobacillus paracasei</name>
    <dbReference type="NCBI Taxonomy" id="321967"/>
    <lineage>
        <taxon>Bacteria</taxon>
        <taxon>Bacillati</taxon>
        <taxon>Bacillota</taxon>
        <taxon>Bacilli</taxon>
        <taxon>Lactobacillales</taxon>
        <taxon>Lactobacillaceae</taxon>
        <taxon>Lacticaseibacillus</taxon>
    </lineage>
</organism>
<name>RS7_LACP3</name>